<comment type="function">
    <text evidence="1">Required for correct progression through G2 phase of the cell cycle and entry into mitosis. Required for RCOR1/CoREST mediated repression of neuronal specific gene promoters (By similarity).</text>
</comment>
<comment type="subunit">
    <text evidence="1">Component of a BHC histone deacetylase complex that contains HDAC1, HDAC2, HMG20B/BRAF35, KDM1A, RCOR1/CoREST and PHF21A/BHC80. The BHC complex may also contain ZMYM2, ZNF217, ZMYM3, GSE1 and GTF2I. Interacts with the BRCA2 tumor suppressor protein (By similarity).</text>
</comment>
<comment type="subcellular location">
    <subcellularLocation>
        <location evidence="4">Nucleus</location>
    </subcellularLocation>
    <subcellularLocation>
        <location evidence="1">Chromosome</location>
    </subcellularLocation>
    <text evidence="1">Localized to condensed chromosomes in mitosis in conjunction with BRCA2.</text>
</comment>
<protein>
    <recommendedName>
        <fullName>SWI/SNF-related matrix-associated actin-dependent regulator of chromatin subfamily E member 1-related</fullName>
        <shortName>SMARCE1-related protein</shortName>
    </recommendedName>
    <alternativeName>
        <fullName>HMG box-containing protein 20B</fullName>
    </alternativeName>
</protein>
<name>HM20B_BOVIN</name>
<feature type="chain" id="PRO_0000281860" description="SWI/SNF-related matrix-associated actin-dependent regulator of chromatin subfamily E member 1-related">
    <location>
        <begin position="1"/>
        <end position="317"/>
    </location>
</feature>
<feature type="DNA-binding region" description="HMG box" evidence="4">
    <location>
        <begin position="70"/>
        <end position="138"/>
    </location>
</feature>
<feature type="region of interest" description="Disordered" evidence="5">
    <location>
        <begin position="1"/>
        <end position="71"/>
    </location>
</feature>
<feature type="coiled-coil region" evidence="3">
    <location>
        <begin position="190"/>
        <end position="257"/>
    </location>
</feature>
<feature type="compositionally biased region" description="Low complexity" evidence="5">
    <location>
        <begin position="1"/>
        <end position="22"/>
    </location>
</feature>
<feature type="compositionally biased region" description="Basic and acidic residues" evidence="5">
    <location>
        <begin position="31"/>
        <end position="52"/>
    </location>
</feature>
<feature type="compositionally biased region" description="Basic residues" evidence="5">
    <location>
        <begin position="53"/>
        <end position="65"/>
    </location>
</feature>
<feature type="modified residue" description="Phosphoserine" evidence="2">
    <location>
        <position position="160"/>
    </location>
</feature>
<feature type="cross-link" description="Glycyl lysine isopeptide (Lys-Gly) (interchain with G-Cter in SUMO2)" evidence="2">
    <location>
        <position position="31"/>
    </location>
</feature>
<reference key="1">
    <citation type="submission" date="2005-11" db="EMBL/GenBank/DDBJ databases">
        <authorList>
            <consortium name="NIH - Mammalian Gene Collection (MGC) project"/>
        </authorList>
    </citation>
    <scope>NUCLEOTIDE SEQUENCE [LARGE SCALE MRNA]</scope>
    <source>
        <strain>Crossbred X Angus</strain>
        <tissue>Liver</tissue>
    </source>
</reference>
<sequence>MSHGPKQPGAASAPASGKAPGQHGSFVVAVKQERGEGPRAGEKGSHEEEPVKKRGWPKGKKRKKILPNGPKAPVTGYVRFLNERREQIRTRHPDLPFPEITKMLGAEWSKLQPAEKQRYLDEAEREKQQYMKELRAYQQSEAYKMCAEKIQEKKIKKEDSSSGLMNTLLNGHKGGDCDGFSTFDVPIFTEEFLDQNKAREAELRRLRKMNVAFEEQNAVLQRHTQSMSSARERLEQELALEERRTLALQQQLQAVRQALTASFASLPVPGTGETPTLSTLDFYMARLHGAIERDPAQHEKLIVRIKEILAQVASEHL</sequence>
<proteinExistence type="evidence at transcript level"/>
<gene>
    <name type="primary">HMG20B</name>
    <name type="synonym">SMARCE1R</name>
</gene>
<evidence type="ECO:0000250" key="1"/>
<evidence type="ECO:0000250" key="2">
    <source>
        <dbReference type="UniProtKB" id="Q9P0W2"/>
    </source>
</evidence>
<evidence type="ECO:0000255" key="3"/>
<evidence type="ECO:0000255" key="4">
    <source>
        <dbReference type="PROSITE-ProRule" id="PRU00267"/>
    </source>
</evidence>
<evidence type="ECO:0000256" key="5">
    <source>
        <dbReference type="SAM" id="MobiDB-lite"/>
    </source>
</evidence>
<keyword id="KW-0131">Cell cycle</keyword>
<keyword id="KW-0156">Chromatin regulator</keyword>
<keyword id="KW-0158">Chromosome</keyword>
<keyword id="KW-0175">Coiled coil</keyword>
<keyword id="KW-0238">DNA-binding</keyword>
<keyword id="KW-1017">Isopeptide bond</keyword>
<keyword id="KW-0539">Nucleus</keyword>
<keyword id="KW-0597">Phosphoprotein</keyword>
<keyword id="KW-1185">Reference proteome</keyword>
<keyword id="KW-0804">Transcription</keyword>
<keyword id="KW-0805">Transcription regulation</keyword>
<keyword id="KW-0832">Ubl conjugation</keyword>
<organism>
    <name type="scientific">Bos taurus</name>
    <name type="common">Bovine</name>
    <dbReference type="NCBI Taxonomy" id="9913"/>
    <lineage>
        <taxon>Eukaryota</taxon>
        <taxon>Metazoa</taxon>
        <taxon>Chordata</taxon>
        <taxon>Craniata</taxon>
        <taxon>Vertebrata</taxon>
        <taxon>Euteleostomi</taxon>
        <taxon>Mammalia</taxon>
        <taxon>Eutheria</taxon>
        <taxon>Laurasiatheria</taxon>
        <taxon>Artiodactyla</taxon>
        <taxon>Ruminantia</taxon>
        <taxon>Pecora</taxon>
        <taxon>Bovidae</taxon>
        <taxon>Bovinae</taxon>
        <taxon>Bos</taxon>
    </lineage>
</organism>
<accession>Q32L68</accession>
<dbReference type="EMBL" id="BC109740">
    <property type="protein sequence ID" value="AAI09741.1"/>
    <property type="molecule type" value="mRNA"/>
</dbReference>
<dbReference type="RefSeq" id="NP_001033143.1">
    <property type="nucleotide sequence ID" value="NM_001038054.2"/>
</dbReference>
<dbReference type="SMR" id="Q32L68"/>
<dbReference type="FunCoup" id="Q32L68">
    <property type="interactions" value="1759"/>
</dbReference>
<dbReference type="STRING" id="9913.ENSBTAP00000011581"/>
<dbReference type="PaxDb" id="9913-ENSBTAP00000054820"/>
<dbReference type="GeneID" id="507723"/>
<dbReference type="KEGG" id="bta:507723"/>
<dbReference type="CTD" id="10362"/>
<dbReference type="VEuPathDB" id="HostDB:ENSBTAG00000008789"/>
<dbReference type="eggNOG" id="KOG0381">
    <property type="taxonomic scope" value="Eukaryota"/>
</dbReference>
<dbReference type="HOGENOM" id="CLU_060006_2_0_1"/>
<dbReference type="InParanoid" id="Q32L68"/>
<dbReference type="OMA" id="NIDRYMH"/>
<dbReference type="OrthoDB" id="3213154at2759"/>
<dbReference type="Reactome" id="R-BTA-3214815">
    <property type="pathway name" value="HDACs deacetylate histones"/>
</dbReference>
<dbReference type="Reactome" id="R-BTA-983231">
    <property type="pathway name" value="Factors involved in megakaryocyte development and platelet production"/>
</dbReference>
<dbReference type="Proteomes" id="UP000009136">
    <property type="component" value="Chromosome 7"/>
</dbReference>
<dbReference type="Bgee" id="ENSBTAG00000008789">
    <property type="expression patterns" value="Expressed in digestive system secreted substance and 106 other cell types or tissues"/>
</dbReference>
<dbReference type="GO" id="GO:0005694">
    <property type="term" value="C:chromosome"/>
    <property type="evidence" value="ECO:0007669"/>
    <property type="project" value="UniProtKB-SubCell"/>
</dbReference>
<dbReference type="GO" id="GO:0005634">
    <property type="term" value="C:nucleus"/>
    <property type="evidence" value="ECO:0000318"/>
    <property type="project" value="GO_Central"/>
</dbReference>
<dbReference type="GO" id="GO:0003677">
    <property type="term" value="F:DNA binding"/>
    <property type="evidence" value="ECO:0007669"/>
    <property type="project" value="UniProtKB-KW"/>
</dbReference>
<dbReference type="GO" id="GO:0006325">
    <property type="term" value="P:chromatin organization"/>
    <property type="evidence" value="ECO:0007669"/>
    <property type="project" value="UniProtKB-KW"/>
</dbReference>
<dbReference type="GO" id="GO:0010468">
    <property type="term" value="P:regulation of gene expression"/>
    <property type="evidence" value="ECO:0000318"/>
    <property type="project" value="GO_Central"/>
</dbReference>
<dbReference type="CDD" id="cd22018">
    <property type="entry name" value="HMG-box_HMG20B"/>
    <property type="match status" value="1"/>
</dbReference>
<dbReference type="FunFam" id="1.10.30.10:FF:000034">
    <property type="entry name" value="SWI/SNF-related matrix-associated regulator of chromatin subfamily E member 1-related"/>
    <property type="match status" value="1"/>
</dbReference>
<dbReference type="Gene3D" id="1.10.30.10">
    <property type="entry name" value="High mobility group box domain"/>
    <property type="match status" value="1"/>
</dbReference>
<dbReference type="InterPro" id="IPR051965">
    <property type="entry name" value="ChromReg_NeuronalGeneExpr"/>
</dbReference>
<dbReference type="InterPro" id="IPR009071">
    <property type="entry name" value="HMG_box_dom"/>
</dbReference>
<dbReference type="InterPro" id="IPR036910">
    <property type="entry name" value="HMG_box_dom_sf"/>
</dbReference>
<dbReference type="PANTHER" id="PTHR46040">
    <property type="entry name" value="HIGH MOBILITY GROUP PROTEIN 2"/>
    <property type="match status" value="1"/>
</dbReference>
<dbReference type="PANTHER" id="PTHR46040:SF2">
    <property type="entry name" value="SWI_SNF-RELATED MATRIX-ASSOCIATED ACTIN-DEPENDENT REGULATOR OF CHROMATIN SUBFAMILY E MEMBER 1-RELATED"/>
    <property type="match status" value="1"/>
</dbReference>
<dbReference type="Pfam" id="PF00505">
    <property type="entry name" value="HMG_box"/>
    <property type="match status" value="1"/>
</dbReference>
<dbReference type="PRINTS" id="PR00886">
    <property type="entry name" value="HIGHMOBLTY12"/>
</dbReference>
<dbReference type="SMART" id="SM00398">
    <property type="entry name" value="HMG"/>
    <property type="match status" value="1"/>
</dbReference>
<dbReference type="SUPFAM" id="SSF47095">
    <property type="entry name" value="HMG-box"/>
    <property type="match status" value="1"/>
</dbReference>
<dbReference type="PROSITE" id="PS50118">
    <property type="entry name" value="HMG_BOX_2"/>
    <property type="match status" value="1"/>
</dbReference>